<comment type="similarity">
    <text evidence="1">Belongs to the UPF0246 family.</text>
</comment>
<name>Y686_SERP5</name>
<accession>A8G9K2</accession>
<sequence>MLVIISPAKTLDYESPLATERFTQPELLDKSKQLIKICRDLTPVQISKLMGISDKLAGLNAARFGDWQPKFTPENARQALLAFKGDVYTGLHAQDFSEDDFDFAQQHLRMLSGLYGVLRPLDLMMPYRLEMGIKLDNAKGKDLYSFWGEQITKKLNEALEQQGDDVVVNLASDEYFKSVKPAKLHGELIKPVFLDEKNGKYKVISFYAKKARGLMSRFIIKNRLTQREQLLDFNLEGYAFDEANSQGNELVFKRPEQ</sequence>
<feature type="chain" id="PRO_1000061631" description="UPF0246 protein Spro_0686">
    <location>
        <begin position="1"/>
        <end position="257"/>
    </location>
</feature>
<evidence type="ECO:0000255" key="1">
    <source>
        <dbReference type="HAMAP-Rule" id="MF_00652"/>
    </source>
</evidence>
<dbReference type="EMBL" id="CP000826">
    <property type="protein sequence ID" value="ABV39792.1"/>
    <property type="molecule type" value="Genomic_DNA"/>
</dbReference>
<dbReference type="SMR" id="A8G9K2"/>
<dbReference type="STRING" id="399741.Spro_0686"/>
<dbReference type="KEGG" id="spe:Spro_0686"/>
<dbReference type="eggNOG" id="COG3022">
    <property type="taxonomic scope" value="Bacteria"/>
</dbReference>
<dbReference type="HOGENOM" id="CLU_061989_0_0_6"/>
<dbReference type="OrthoDB" id="9777133at2"/>
<dbReference type="GO" id="GO:0005829">
    <property type="term" value="C:cytosol"/>
    <property type="evidence" value="ECO:0007669"/>
    <property type="project" value="TreeGrafter"/>
</dbReference>
<dbReference type="GO" id="GO:0033194">
    <property type="term" value="P:response to hydroperoxide"/>
    <property type="evidence" value="ECO:0007669"/>
    <property type="project" value="TreeGrafter"/>
</dbReference>
<dbReference type="HAMAP" id="MF_00652">
    <property type="entry name" value="UPF0246"/>
    <property type="match status" value="1"/>
</dbReference>
<dbReference type="InterPro" id="IPR005583">
    <property type="entry name" value="YaaA"/>
</dbReference>
<dbReference type="NCBIfam" id="NF002541">
    <property type="entry name" value="PRK02101.1-1"/>
    <property type="match status" value="1"/>
</dbReference>
<dbReference type="NCBIfam" id="NF002542">
    <property type="entry name" value="PRK02101.1-3"/>
    <property type="match status" value="1"/>
</dbReference>
<dbReference type="PANTHER" id="PTHR30283:SF4">
    <property type="entry name" value="PEROXIDE STRESS RESISTANCE PROTEIN YAAA"/>
    <property type="match status" value="1"/>
</dbReference>
<dbReference type="PANTHER" id="PTHR30283">
    <property type="entry name" value="PEROXIDE STRESS RESPONSE PROTEIN YAAA"/>
    <property type="match status" value="1"/>
</dbReference>
<dbReference type="Pfam" id="PF03883">
    <property type="entry name" value="H2O2_YaaD"/>
    <property type="match status" value="1"/>
</dbReference>
<gene>
    <name type="ordered locus">Spro_0686</name>
</gene>
<proteinExistence type="inferred from homology"/>
<protein>
    <recommendedName>
        <fullName evidence="1">UPF0246 protein Spro_0686</fullName>
    </recommendedName>
</protein>
<reference key="1">
    <citation type="submission" date="2007-09" db="EMBL/GenBank/DDBJ databases">
        <title>Complete sequence of chromosome of Serratia proteamaculans 568.</title>
        <authorList>
            <consortium name="US DOE Joint Genome Institute"/>
            <person name="Copeland A."/>
            <person name="Lucas S."/>
            <person name="Lapidus A."/>
            <person name="Barry K."/>
            <person name="Glavina del Rio T."/>
            <person name="Dalin E."/>
            <person name="Tice H."/>
            <person name="Pitluck S."/>
            <person name="Chain P."/>
            <person name="Malfatti S."/>
            <person name="Shin M."/>
            <person name="Vergez L."/>
            <person name="Schmutz J."/>
            <person name="Larimer F."/>
            <person name="Land M."/>
            <person name="Hauser L."/>
            <person name="Kyrpides N."/>
            <person name="Kim E."/>
            <person name="Taghavi S."/>
            <person name="Newman L."/>
            <person name="Vangronsveld J."/>
            <person name="van der Lelie D."/>
            <person name="Richardson P."/>
        </authorList>
    </citation>
    <scope>NUCLEOTIDE SEQUENCE [LARGE SCALE GENOMIC DNA]</scope>
    <source>
        <strain>568</strain>
    </source>
</reference>
<organism>
    <name type="scientific">Serratia proteamaculans (strain 568)</name>
    <dbReference type="NCBI Taxonomy" id="399741"/>
    <lineage>
        <taxon>Bacteria</taxon>
        <taxon>Pseudomonadati</taxon>
        <taxon>Pseudomonadota</taxon>
        <taxon>Gammaproteobacteria</taxon>
        <taxon>Enterobacterales</taxon>
        <taxon>Yersiniaceae</taxon>
        <taxon>Serratia</taxon>
    </lineage>
</organism>